<feature type="chain" id="PRO_0000106192" description="Nucleotide-binding protein PM1656">
    <location>
        <begin position="1"/>
        <end position="163"/>
    </location>
</feature>
<name>Y1656_PASMU</name>
<keyword id="KW-0547">Nucleotide-binding</keyword>
<keyword id="KW-1185">Reference proteome</keyword>
<accession>Q9CKG2</accession>
<proteinExistence type="inferred from homology"/>
<dbReference type="EMBL" id="AE004439">
    <property type="protein sequence ID" value="AAK03740.1"/>
    <property type="molecule type" value="Genomic_DNA"/>
</dbReference>
<dbReference type="RefSeq" id="WP_005718544.1">
    <property type="nucleotide sequence ID" value="NC_002663.1"/>
</dbReference>
<dbReference type="SMR" id="Q9CKG2"/>
<dbReference type="STRING" id="272843.PM1656"/>
<dbReference type="EnsemblBacteria" id="AAK03740">
    <property type="protein sequence ID" value="AAK03740"/>
    <property type="gene ID" value="PM1656"/>
</dbReference>
<dbReference type="KEGG" id="pmu:PM1656"/>
<dbReference type="HOGENOM" id="CLU_099839_1_0_6"/>
<dbReference type="OrthoDB" id="9801447at2"/>
<dbReference type="Proteomes" id="UP000000809">
    <property type="component" value="Chromosome"/>
</dbReference>
<dbReference type="GO" id="GO:0005829">
    <property type="term" value="C:cytosol"/>
    <property type="evidence" value="ECO:0007669"/>
    <property type="project" value="TreeGrafter"/>
</dbReference>
<dbReference type="GO" id="GO:0000166">
    <property type="term" value="F:nucleotide binding"/>
    <property type="evidence" value="ECO:0007669"/>
    <property type="project" value="TreeGrafter"/>
</dbReference>
<dbReference type="CDD" id="cd11740">
    <property type="entry name" value="YajQ_like"/>
    <property type="match status" value="1"/>
</dbReference>
<dbReference type="FunFam" id="3.30.70.860:FF:000001">
    <property type="entry name" value="UPF0234 protein YajQ"/>
    <property type="match status" value="1"/>
</dbReference>
<dbReference type="FunFam" id="3.30.70.990:FF:000001">
    <property type="entry name" value="UPF0234 protein YajQ"/>
    <property type="match status" value="1"/>
</dbReference>
<dbReference type="Gene3D" id="3.30.70.860">
    <property type="match status" value="1"/>
</dbReference>
<dbReference type="Gene3D" id="3.30.70.990">
    <property type="entry name" value="YajQ-like, domain 2"/>
    <property type="match status" value="1"/>
</dbReference>
<dbReference type="HAMAP" id="MF_00632">
    <property type="entry name" value="YajQ"/>
    <property type="match status" value="1"/>
</dbReference>
<dbReference type="InterPro" id="IPR007551">
    <property type="entry name" value="DUF520"/>
</dbReference>
<dbReference type="InterPro" id="IPR035571">
    <property type="entry name" value="UPF0234-like_C"/>
</dbReference>
<dbReference type="InterPro" id="IPR035570">
    <property type="entry name" value="UPF0234_N"/>
</dbReference>
<dbReference type="InterPro" id="IPR036183">
    <property type="entry name" value="YajQ-like_sf"/>
</dbReference>
<dbReference type="NCBIfam" id="NF003819">
    <property type="entry name" value="PRK05412.1"/>
    <property type="match status" value="1"/>
</dbReference>
<dbReference type="PANTHER" id="PTHR30476">
    <property type="entry name" value="UPF0234 PROTEIN YAJQ"/>
    <property type="match status" value="1"/>
</dbReference>
<dbReference type="PANTHER" id="PTHR30476:SF0">
    <property type="entry name" value="UPF0234 PROTEIN YAJQ"/>
    <property type="match status" value="1"/>
</dbReference>
<dbReference type="Pfam" id="PF04461">
    <property type="entry name" value="DUF520"/>
    <property type="match status" value="1"/>
</dbReference>
<dbReference type="SUPFAM" id="SSF89963">
    <property type="entry name" value="YajQ-like"/>
    <property type="match status" value="2"/>
</dbReference>
<sequence length="163" mass="18493">MPSFDIVSEITLHEVRNAVENANRDLTNRWDFRNVQAAIELNEKNESIKVSSESDFQVEQLVDILRNACIKRGIDSGSLDIPTEYEHSGKTYSKEIKLKQGIASEMAKKITKLIKDSKLKVQTQIQGEQVRVTGKSRDDLQAVIQLVKGAELGQPFQFNNFRD</sequence>
<comment type="function">
    <text evidence="1">Nucleotide-binding protein.</text>
</comment>
<comment type="similarity">
    <text evidence="1">Belongs to the YajQ family.</text>
</comment>
<gene>
    <name type="ordered locus">PM1656</name>
</gene>
<reference key="1">
    <citation type="journal article" date="2001" name="Proc. Natl. Acad. Sci. U.S.A.">
        <title>Complete genomic sequence of Pasteurella multocida Pm70.</title>
        <authorList>
            <person name="May B.J."/>
            <person name="Zhang Q."/>
            <person name="Li L.L."/>
            <person name="Paustian M.L."/>
            <person name="Whittam T.S."/>
            <person name="Kapur V."/>
        </authorList>
    </citation>
    <scope>NUCLEOTIDE SEQUENCE [LARGE SCALE GENOMIC DNA]</scope>
    <source>
        <strain>Pm70</strain>
    </source>
</reference>
<evidence type="ECO:0000255" key="1">
    <source>
        <dbReference type="HAMAP-Rule" id="MF_00632"/>
    </source>
</evidence>
<protein>
    <recommendedName>
        <fullName evidence="1">Nucleotide-binding protein PM1656</fullName>
    </recommendedName>
</protein>
<organism>
    <name type="scientific">Pasteurella multocida (strain Pm70)</name>
    <dbReference type="NCBI Taxonomy" id="272843"/>
    <lineage>
        <taxon>Bacteria</taxon>
        <taxon>Pseudomonadati</taxon>
        <taxon>Pseudomonadota</taxon>
        <taxon>Gammaproteobacteria</taxon>
        <taxon>Pasteurellales</taxon>
        <taxon>Pasteurellaceae</taxon>
        <taxon>Pasteurella</taxon>
    </lineage>
</organism>